<sequence length="364" mass="39505">MSNAIESLGSLWGPLLVLGQIGLFTLVLLLSIAFLLLLDRKVWAGVMMRKGPNVVGPFGLLQSFADFGKFLLKEIVIPAGANKAVFILAPILTCTLAFVTWAAIPVAPGTATGTSWVIANLNVGVLYLFAISSLGVYGIIMGGWASNSKYPFLGALRSAAQMVSYEVSIGFVIVTVILLVGSMNLTTIVNNQDGGIQNWHVFSFQYFPLIVVMVPMFVIFFISALAETNRPPFDLPEAESELVAGYQVEYGSTPYLLFMLGEYLNIVLMCAMMTILFLGGWHGPISLGPELTANLPPLLLSLSGLAWFMGKVLFCFFLFALVKAIVPRYRYDQLMRLGWKIFLPTSLAAVIIVAGYVTFVGGLS</sequence>
<keyword id="KW-0997">Cell inner membrane</keyword>
<keyword id="KW-1003">Cell membrane</keyword>
<keyword id="KW-0472">Membrane</keyword>
<keyword id="KW-0520">NAD</keyword>
<keyword id="KW-0874">Quinone</keyword>
<keyword id="KW-1185">Reference proteome</keyword>
<keyword id="KW-1278">Translocase</keyword>
<keyword id="KW-0812">Transmembrane</keyword>
<keyword id="KW-1133">Transmembrane helix</keyword>
<keyword id="KW-0830">Ubiquinone</keyword>
<evidence type="ECO:0000255" key="1">
    <source>
        <dbReference type="HAMAP-Rule" id="MF_01350"/>
    </source>
</evidence>
<proteinExistence type="inferred from homology"/>
<organism>
    <name type="scientific">Hyphomonas neptunium (strain ATCC 15444)</name>
    <dbReference type="NCBI Taxonomy" id="228405"/>
    <lineage>
        <taxon>Bacteria</taxon>
        <taxon>Pseudomonadati</taxon>
        <taxon>Pseudomonadota</taxon>
        <taxon>Alphaproteobacteria</taxon>
        <taxon>Hyphomonadales</taxon>
        <taxon>Hyphomonadaceae</taxon>
        <taxon>Hyphomonas</taxon>
    </lineage>
</organism>
<reference key="1">
    <citation type="journal article" date="2006" name="J. Bacteriol.">
        <title>Comparative genomic evidence for a close relationship between the dimorphic prosthecate bacteria Hyphomonas neptunium and Caulobacter crescentus.</title>
        <authorList>
            <person name="Badger J.H."/>
            <person name="Hoover T.R."/>
            <person name="Brun Y.V."/>
            <person name="Weiner R.M."/>
            <person name="Laub M.T."/>
            <person name="Alexandre G."/>
            <person name="Mrazek J."/>
            <person name="Ren Q."/>
            <person name="Paulsen I.T."/>
            <person name="Nelson K.E."/>
            <person name="Khouri H.M."/>
            <person name="Radune D."/>
            <person name="Sosa J."/>
            <person name="Dodson R.J."/>
            <person name="Sullivan S.A."/>
            <person name="Rosovitz M.J."/>
            <person name="Madupu R."/>
            <person name="Brinkac L.M."/>
            <person name="Durkin A.S."/>
            <person name="Daugherty S.C."/>
            <person name="Kothari S.P."/>
            <person name="Giglio M.G."/>
            <person name="Zhou L."/>
            <person name="Haft D.H."/>
            <person name="Selengut J.D."/>
            <person name="Davidsen T.M."/>
            <person name="Yang Q."/>
            <person name="Zafar N."/>
            <person name="Ward N.L."/>
        </authorList>
    </citation>
    <scope>NUCLEOTIDE SEQUENCE [LARGE SCALE GENOMIC DNA]</scope>
    <source>
        <strain>ATCC 15444</strain>
    </source>
</reference>
<protein>
    <recommendedName>
        <fullName evidence="1">NADH-quinone oxidoreductase subunit H</fullName>
        <ecNumber evidence="1">7.1.1.-</ecNumber>
    </recommendedName>
    <alternativeName>
        <fullName evidence="1">NADH dehydrogenase I subunit H</fullName>
    </alternativeName>
    <alternativeName>
        <fullName evidence="1">NDH-1 subunit H</fullName>
    </alternativeName>
</protein>
<name>NUOH_HYPNA</name>
<gene>
    <name evidence="1" type="primary">nuoH</name>
    <name type="ordered locus">HNE_1752</name>
</gene>
<accession>Q0C1D7</accession>
<comment type="function">
    <text evidence="1">NDH-1 shuttles electrons from NADH, via FMN and iron-sulfur (Fe-S) centers, to quinones in the respiratory chain. The immediate electron acceptor for the enzyme in this species is believed to be ubiquinone. Couples the redox reaction to proton translocation (for every two electrons transferred, four hydrogen ions are translocated across the cytoplasmic membrane), and thus conserves the redox energy in a proton gradient. This subunit may bind ubiquinone.</text>
</comment>
<comment type="catalytic activity">
    <reaction evidence="1">
        <text>a quinone + NADH + 5 H(+)(in) = a quinol + NAD(+) + 4 H(+)(out)</text>
        <dbReference type="Rhea" id="RHEA:57888"/>
        <dbReference type="ChEBI" id="CHEBI:15378"/>
        <dbReference type="ChEBI" id="CHEBI:24646"/>
        <dbReference type="ChEBI" id="CHEBI:57540"/>
        <dbReference type="ChEBI" id="CHEBI:57945"/>
        <dbReference type="ChEBI" id="CHEBI:132124"/>
    </reaction>
</comment>
<comment type="subunit">
    <text evidence="1">NDH-1 is composed of 14 different subunits. Subunits NuoA, H, J, K, L, M, N constitute the membrane sector of the complex.</text>
</comment>
<comment type="subcellular location">
    <subcellularLocation>
        <location evidence="1">Cell inner membrane</location>
        <topology evidence="1">Multi-pass membrane protein</topology>
    </subcellularLocation>
</comment>
<comment type="similarity">
    <text evidence="1">Belongs to the complex I subunit 1 family.</text>
</comment>
<dbReference type="EC" id="7.1.1.-" evidence="1"/>
<dbReference type="EMBL" id="CP000158">
    <property type="protein sequence ID" value="ABI77373.1"/>
    <property type="molecule type" value="Genomic_DNA"/>
</dbReference>
<dbReference type="RefSeq" id="WP_011646756.1">
    <property type="nucleotide sequence ID" value="NC_008358.1"/>
</dbReference>
<dbReference type="SMR" id="Q0C1D7"/>
<dbReference type="STRING" id="228405.HNE_1752"/>
<dbReference type="KEGG" id="hne:HNE_1752"/>
<dbReference type="eggNOG" id="COG1005">
    <property type="taxonomic scope" value="Bacteria"/>
</dbReference>
<dbReference type="HOGENOM" id="CLU_015134_0_1_5"/>
<dbReference type="Proteomes" id="UP000001959">
    <property type="component" value="Chromosome"/>
</dbReference>
<dbReference type="GO" id="GO:0005886">
    <property type="term" value="C:plasma membrane"/>
    <property type="evidence" value="ECO:0007669"/>
    <property type="project" value="UniProtKB-SubCell"/>
</dbReference>
<dbReference type="GO" id="GO:0003954">
    <property type="term" value="F:NADH dehydrogenase activity"/>
    <property type="evidence" value="ECO:0007669"/>
    <property type="project" value="TreeGrafter"/>
</dbReference>
<dbReference type="GO" id="GO:0016655">
    <property type="term" value="F:oxidoreductase activity, acting on NAD(P)H, quinone or similar compound as acceptor"/>
    <property type="evidence" value="ECO:0007669"/>
    <property type="project" value="UniProtKB-UniRule"/>
</dbReference>
<dbReference type="GO" id="GO:0048038">
    <property type="term" value="F:quinone binding"/>
    <property type="evidence" value="ECO:0007669"/>
    <property type="project" value="UniProtKB-KW"/>
</dbReference>
<dbReference type="GO" id="GO:0009060">
    <property type="term" value="P:aerobic respiration"/>
    <property type="evidence" value="ECO:0007669"/>
    <property type="project" value="TreeGrafter"/>
</dbReference>
<dbReference type="HAMAP" id="MF_01350">
    <property type="entry name" value="NDH1_NuoH"/>
    <property type="match status" value="1"/>
</dbReference>
<dbReference type="InterPro" id="IPR001694">
    <property type="entry name" value="NADH_UbQ_OxRdtase_su1/FPO"/>
</dbReference>
<dbReference type="InterPro" id="IPR018086">
    <property type="entry name" value="NADH_UbQ_OxRdtase_su1_CS"/>
</dbReference>
<dbReference type="NCBIfam" id="NF004745">
    <property type="entry name" value="PRK06076.1-6"/>
    <property type="match status" value="1"/>
</dbReference>
<dbReference type="PANTHER" id="PTHR11432">
    <property type="entry name" value="NADH DEHYDROGENASE SUBUNIT 1"/>
    <property type="match status" value="1"/>
</dbReference>
<dbReference type="PANTHER" id="PTHR11432:SF3">
    <property type="entry name" value="NADH-UBIQUINONE OXIDOREDUCTASE CHAIN 1"/>
    <property type="match status" value="1"/>
</dbReference>
<dbReference type="Pfam" id="PF00146">
    <property type="entry name" value="NADHdh"/>
    <property type="match status" value="1"/>
</dbReference>
<dbReference type="PROSITE" id="PS00668">
    <property type="entry name" value="COMPLEX1_ND1_2"/>
    <property type="match status" value="1"/>
</dbReference>
<feature type="chain" id="PRO_0000299939" description="NADH-quinone oxidoreductase subunit H">
    <location>
        <begin position="1"/>
        <end position="364"/>
    </location>
</feature>
<feature type="transmembrane region" description="Helical" evidence="1">
    <location>
        <begin position="15"/>
        <end position="35"/>
    </location>
</feature>
<feature type="transmembrane region" description="Helical" evidence="1">
    <location>
        <begin position="84"/>
        <end position="104"/>
    </location>
</feature>
<feature type="transmembrane region" description="Helical" evidence="1">
    <location>
        <begin position="123"/>
        <end position="143"/>
    </location>
</feature>
<feature type="transmembrane region" description="Helical" evidence="1">
    <location>
        <begin position="169"/>
        <end position="189"/>
    </location>
</feature>
<feature type="transmembrane region" description="Helical" evidence="1">
    <location>
        <begin position="206"/>
        <end position="226"/>
    </location>
</feature>
<feature type="transmembrane region" description="Helical" evidence="1">
    <location>
        <begin position="257"/>
        <end position="277"/>
    </location>
</feature>
<feature type="transmembrane region" description="Helical" evidence="1">
    <location>
        <begin position="302"/>
        <end position="322"/>
    </location>
</feature>
<feature type="transmembrane region" description="Helical" evidence="1">
    <location>
        <begin position="341"/>
        <end position="361"/>
    </location>
</feature>